<name>OTC_CLOB6</name>
<feature type="chain" id="PRO_1000213567" description="Ornithine carbamoyltransferase">
    <location>
        <begin position="1"/>
        <end position="333"/>
    </location>
</feature>
<feature type="binding site" evidence="2">
    <location>
        <begin position="56"/>
        <end position="59"/>
    </location>
    <ligand>
        <name>carbamoyl phosphate</name>
        <dbReference type="ChEBI" id="CHEBI:58228"/>
    </ligand>
</feature>
<feature type="binding site" evidence="2">
    <location>
        <position position="107"/>
    </location>
    <ligand>
        <name>carbamoyl phosphate</name>
        <dbReference type="ChEBI" id="CHEBI:58228"/>
    </ligand>
</feature>
<feature type="binding site" evidence="2">
    <location>
        <begin position="134"/>
        <end position="137"/>
    </location>
    <ligand>
        <name>carbamoyl phosphate</name>
        <dbReference type="ChEBI" id="CHEBI:58228"/>
    </ligand>
</feature>
<feature type="binding site" evidence="2">
    <location>
        <position position="167"/>
    </location>
    <ligand>
        <name>L-ornithine</name>
        <dbReference type="ChEBI" id="CHEBI:46911"/>
    </ligand>
</feature>
<feature type="binding site" evidence="2">
    <location>
        <position position="231"/>
    </location>
    <ligand>
        <name>L-ornithine</name>
        <dbReference type="ChEBI" id="CHEBI:46911"/>
    </ligand>
</feature>
<feature type="binding site" evidence="2">
    <location>
        <begin position="235"/>
        <end position="236"/>
    </location>
    <ligand>
        <name>L-ornithine</name>
        <dbReference type="ChEBI" id="CHEBI:46911"/>
    </ligand>
</feature>
<feature type="binding site" evidence="2">
    <location>
        <begin position="273"/>
        <end position="274"/>
    </location>
    <ligand>
        <name>carbamoyl phosphate</name>
        <dbReference type="ChEBI" id="CHEBI:58228"/>
    </ligand>
</feature>
<feature type="binding site" evidence="2">
    <location>
        <position position="318"/>
    </location>
    <ligand>
        <name>carbamoyl phosphate</name>
        <dbReference type="ChEBI" id="CHEBI:58228"/>
    </ligand>
</feature>
<comment type="function">
    <text evidence="1">Reversibly catalyzes the transfer of the carbamoyl group from carbamoyl phosphate (CP) to the N(epsilon) atom of ornithine (ORN) to produce L-citrulline.</text>
</comment>
<comment type="catalytic activity">
    <reaction evidence="2">
        <text>carbamoyl phosphate + L-ornithine = L-citrulline + phosphate + H(+)</text>
        <dbReference type="Rhea" id="RHEA:19513"/>
        <dbReference type="ChEBI" id="CHEBI:15378"/>
        <dbReference type="ChEBI" id="CHEBI:43474"/>
        <dbReference type="ChEBI" id="CHEBI:46911"/>
        <dbReference type="ChEBI" id="CHEBI:57743"/>
        <dbReference type="ChEBI" id="CHEBI:58228"/>
        <dbReference type="EC" id="2.1.3.3"/>
    </reaction>
</comment>
<comment type="pathway">
    <text evidence="2">Amino-acid degradation; L-arginine degradation via ADI pathway; carbamoyl phosphate from L-arginine: step 2/2.</text>
</comment>
<comment type="subcellular location">
    <subcellularLocation>
        <location evidence="2">Cytoplasm</location>
    </subcellularLocation>
</comment>
<comment type="similarity">
    <text evidence="2">Belongs to the aspartate/ornithine carbamoyltransferase superfamily. OTCase family.</text>
</comment>
<keyword id="KW-0056">Arginine metabolism</keyword>
<keyword id="KW-0963">Cytoplasm</keyword>
<keyword id="KW-0808">Transferase</keyword>
<protein>
    <recommendedName>
        <fullName evidence="2">Ornithine carbamoyltransferase</fullName>
        <shortName evidence="2">OTCase</shortName>
        <ecNumber evidence="2">2.1.3.3</ecNumber>
    </recommendedName>
</protein>
<sequence length="333" mass="37249">MFNLKNRNFLTLMDFTPKEINYFLDLARDLKRAKYTGTEVQRMKGKNIALIFEKASTRTRCAFEVGAKDQGAHVTYLGPTGSHIGKKESAADTARVLGRMYDGIEYRGFGQEIVETLAEYAGVPVWNGLTDEDHPTQILADFLTIREHFNKPLNEIKFAYVGDGANNMANALMIGAVKMGMDFRIVSPKEIPTDAALVAKCKEIAAETGAKVTITDNIEEGVKGCDVLYTDVWVSMGEPDSVWESKIKLLTPYRVDMNMIKMTGNPDAKFMHCLPAFHDEETAVGKEIKEKYGLSEMEVSHELFESKYSIVFDEAENRMHTIKAVMVATLGDQ</sequence>
<dbReference type="EC" id="2.1.3.3" evidence="2"/>
<dbReference type="EMBL" id="CP001083">
    <property type="protein sequence ID" value="ACQ53036.1"/>
    <property type="molecule type" value="Genomic_DNA"/>
</dbReference>
<dbReference type="SMR" id="C3L179"/>
<dbReference type="KEGG" id="cbi:CLJ_B2823"/>
<dbReference type="HOGENOM" id="CLU_043846_3_1_9"/>
<dbReference type="UniPathway" id="UPA00254">
    <property type="reaction ID" value="UER00365"/>
</dbReference>
<dbReference type="Proteomes" id="UP000002333">
    <property type="component" value="Chromosome"/>
</dbReference>
<dbReference type="GO" id="GO:0005737">
    <property type="term" value="C:cytoplasm"/>
    <property type="evidence" value="ECO:0007669"/>
    <property type="project" value="UniProtKB-SubCell"/>
</dbReference>
<dbReference type="GO" id="GO:0016597">
    <property type="term" value="F:amino acid binding"/>
    <property type="evidence" value="ECO:0007669"/>
    <property type="project" value="InterPro"/>
</dbReference>
<dbReference type="GO" id="GO:0004585">
    <property type="term" value="F:ornithine carbamoyltransferase activity"/>
    <property type="evidence" value="ECO:0007669"/>
    <property type="project" value="UniProtKB-UniRule"/>
</dbReference>
<dbReference type="GO" id="GO:0042450">
    <property type="term" value="P:arginine biosynthetic process via ornithine"/>
    <property type="evidence" value="ECO:0007669"/>
    <property type="project" value="TreeGrafter"/>
</dbReference>
<dbReference type="GO" id="GO:0019547">
    <property type="term" value="P:arginine catabolic process to ornithine"/>
    <property type="evidence" value="ECO:0007669"/>
    <property type="project" value="UniProtKB-UniRule"/>
</dbReference>
<dbReference type="GO" id="GO:0019240">
    <property type="term" value="P:citrulline biosynthetic process"/>
    <property type="evidence" value="ECO:0007669"/>
    <property type="project" value="TreeGrafter"/>
</dbReference>
<dbReference type="FunFam" id="3.40.50.1370:FF:000004">
    <property type="entry name" value="Ornithine carbamoyltransferase"/>
    <property type="match status" value="1"/>
</dbReference>
<dbReference type="Gene3D" id="3.40.50.1370">
    <property type="entry name" value="Aspartate/ornithine carbamoyltransferase"/>
    <property type="match status" value="2"/>
</dbReference>
<dbReference type="HAMAP" id="MF_01109">
    <property type="entry name" value="OTCase"/>
    <property type="match status" value="1"/>
</dbReference>
<dbReference type="InterPro" id="IPR006132">
    <property type="entry name" value="Asp/Orn_carbamoyltranf_P-bd"/>
</dbReference>
<dbReference type="InterPro" id="IPR006130">
    <property type="entry name" value="Asp/Orn_carbamoylTrfase"/>
</dbReference>
<dbReference type="InterPro" id="IPR036901">
    <property type="entry name" value="Asp/Orn_carbamoylTrfase_sf"/>
</dbReference>
<dbReference type="InterPro" id="IPR006131">
    <property type="entry name" value="Asp_carbamoyltransf_Asp/Orn-bd"/>
</dbReference>
<dbReference type="InterPro" id="IPR002292">
    <property type="entry name" value="Orn/put_carbamltrans"/>
</dbReference>
<dbReference type="InterPro" id="IPR024904">
    <property type="entry name" value="OTCase_ArgI"/>
</dbReference>
<dbReference type="NCBIfam" id="TIGR00658">
    <property type="entry name" value="orni_carb_tr"/>
    <property type="match status" value="1"/>
</dbReference>
<dbReference type="NCBIfam" id="NF003286">
    <property type="entry name" value="PRK04284.1"/>
    <property type="match status" value="1"/>
</dbReference>
<dbReference type="PANTHER" id="PTHR45753:SF2">
    <property type="entry name" value="ORNITHINE CARBAMOYLTRANSFERASE"/>
    <property type="match status" value="1"/>
</dbReference>
<dbReference type="PANTHER" id="PTHR45753">
    <property type="entry name" value="ORNITHINE CARBAMOYLTRANSFERASE, MITOCHONDRIAL"/>
    <property type="match status" value="1"/>
</dbReference>
<dbReference type="Pfam" id="PF00185">
    <property type="entry name" value="OTCace"/>
    <property type="match status" value="1"/>
</dbReference>
<dbReference type="Pfam" id="PF02729">
    <property type="entry name" value="OTCace_N"/>
    <property type="match status" value="1"/>
</dbReference>
<dbReference type="PRINTS" id="PR00100">
    <property type="entry name" value="AOTCASE"/>
</dbReference>
<dbReference type="PRINTS" id="PR00102">
    <property type="entry name" value="OTCASE"/>
</dbReference>
<dbReference type="SUPFAM" id="SSF53671">
    <property type="entry name" value="Aspartate/ornithine carbamoyltransferase"/>
    <property type="match status" value="1"/>
</dbReference>
<dbReference type="PROSITE" id="PS00097">
    <property type="entry name" value="CARBAMOYLTRANSFERASE"/>
    <property type="match status" value="1"/>
</dbReference>
<gene>
    <name evidence="2" type="primary">arcB</name>
    <name type="ordered locus">CLJ_B2823</name>
</gene>
<organism>
    <name type="scientific">Clostridium botulinum (strain 657 / Type Ba4)</name>
    <dbReference type="NCBI Taxonomy" id="515621"/>
    <lineage>
        <taxon>Bacteria</taxon>
        <taxon>Bacillati</taxon>
        <taxon>Bacillota</taxon>
        <taxon>Clostridia</taxon>
        <taxon>Eubacteriales</taxon>
        <taxon>Clostridiaceae</taxon>
        <taxon>Clostridium</taxon>
    </lineage>
</organism>
<accession>C3L179</accession>
<reference key="1">
    <citation type="submission" date="2008-05" db="EMBL/GenBank/DDBJ databases">
        <title>Genome sequence of Clostridium botulinum Ba4 strain 657.</title>
        <authorList>
            <person name="Shrivastava S."/>
            <person name="Brown J.L."/>
            <person name="Bruce D."/>
            <person name="Detter C."/>
            <person name="Munk C."/>
            <person name="Smith L.A."/>
            <person name="Smith T.J."/>
            <person name="Sutton G."/>
            <person name="Brettin T.S."/>
        </authorList>
    </citation>
    <scope>NUCLEOTIDE SEQUENCE [LARGE SCALE GENOMIC DNA]</scope>
    <source>
        <strain>657 / Type Ba4</strain>
    </source>
</reference>
<evidence type="ECO:0000250" key="1"/>
<evidence type="ECO:0000255" key="2">
    <source>
        <dbReference type="HAMAP-Rule" id="MF_01109"/>
    </source>
</evidence>
<proteinExistence type="inferred from homology"/>